<sequence length="230" mass="26070">MSEPNEGGSSYRSGGNYNGYKPSGNRYQPNSNNRGPPRYRSNHRQDGGYYNNGGYHQQQGYGYGQPTHAHGVQRQTYRGGSYHPYQHSDSRYGSNSTYRRPYGQQSVPPAPPPSTASSVSSSSAYSRGSNVLPVSRNSYPSPKYEQPKKKFTIPKDENPFIYMMSNDDHSRTSKLKEVYKENDQIDNKLEELKLKIFKDELELGLMSTQCEKDALNVQLTQEKLDSLLMN</sequence>
<evidence type="ECO:0000250" key="1"/>
<evidence type="ECO:0000255" key="2"/>
<evidence type="ECO:0000256" key="3">
    <source>
        <dbReference type="SAM" id="MobiDB-lite"/>
    </source>
</evidence>
<name>LGE1_KLULA</name>
<dbReference type="EMBL" id="CR382122">
    <property type="protein sequence ID" value="CAH02359.1"/>
    <property type="molecule type" value="Genomic_DNA"/>
</dbReference>
<dbReference type="RefSeq" id="XP_451966.1">
    <property type="nucleotide sequence ID" value="XM_451966.1"/>
</dbReference>
<dbReference type="SMR" id="Q6CVS3"/>
<dbReference type="STRING" id="284590.Q6CVS3"/>
<dbReference type="PaxDb" id="284590-Q6CVS3"/>
<dbReference type="KEGG" id="kla:KLLA0_B09834g"/>
<dbReference type="eggNOG" id="ENOG502SA4A">
    <property type="taxonomic scope" value="Eukaryota"/>
</dbReference>
<dbReference type="HOGENOM" id="CLU_1321715_0_0_1"/>
<dbReference type="InParanoid" id="Q6CVS3"/>
<dbReference type="OMA" id="RIDEHES"/>
<dbReference type="Proteomes" id="UP000000598">
    <property type="component" value="Chromosome B"/>
</dbReference>
<dbReference type="GO" id="GO:0005634">
    <property type="term" value="C:nucleus"/>
    <property type="evidence" value="ECO:0007669"/>
    <property type="project" value="UniProtKB-SubCell"/>
</dbReference>
<dbReference type="GO" id="GO:0006325">
    <property type="term" value="P:chromatin organization"/>
    <property type="evidence" value="ECO:0007669"/>
    <property type="project" value="UniProtKB-KW"/>
</dbReference>
<dbReference type="InterPro" id="IPR021581">
    <property type="entry name" value="Tscrpt_reg_Lge1"/>
</dbReference>
<dbReference type="Pfam" id="PF11488">
    <property type="entry name" value="Lge1"/>
    <property type="match status" value="1"/>
</dbReference>
<gene>
    <name type="primary">LGE1</name>
    <name type="ordered locus">KLLA0B09834g</name>
</gene>
<accession>Q6CVS3</accession>
<protein>
    <recommendedName>
        <fullName>Transcriptional regulatory protein LGE1</fullName>
    </recommendedName>
</protein>
<proteinExistence type="inferred from homology"/>
<comment type="function">
    <text evidence="1">Involved in transcriptional activation. Also required for ubiquitination of histone H2B to form H2BK123ub1. H2BK123ub1 gives a specific tag for epigenetic transcriptional activation, telomeric silencing, and is also a prerequisite for H3K4me and H3K79me formation. Its precise role in H2BK123ub1 formation however is unclear (By similarity).</text>
</comment>
<comment type="subcellular location">
    <subcellularLocation>
        <location evidence="1">Nucleus</location>
    </subcellularLocation>
</comment>
<feature type="chain" id="PRO_0000076233" description="Transcriptional regulatory protein LGE1">
    <location>
        <begin position="1"/>
        <end position="230"/>
    </location>
</feature>
<feature type="region of interest" description="Disordered" evidence="3">
    <location>
        <begin position="1"/>
        <end position="150"/>
    </location>
</feature>
<feature type="coiled-coil region" evidence="2">
    <location>
        <begin position="172"/>
        <end position="203"/>
    </location>
</feature>
<feature type="compositionally biased region" description="Low complexity" evidence="3">
    <location>
        <begin position="1"/>
        <end position="20"/>
    </location>
</feature>
<feature type="compositionally biased region" description="Polar residues" evidence="3">
    <location>
        <begin position="25"/>
        <end position="34"/>
    </location>
</feature>
<feature type="compositionally biased region" description="Low complexity" evidence="3">
    <location>
        <begin position="47"/>
        <end position="60"/>
    </location>
</feature>
<feature type="compositionally biased region" description="Low complexity" evidence="3">
    <location>
        <begin position="115"/>
        <end position="126"/>
    </location>
</feature>
<reference key="1">
    <citation type="journal article" date="2004" name="Nature">
        <title>Genome evolution in yeasts.</title>
        <authorList>
            <person name="Dujon B."/>
            <person name="Sherman D."/>
            <person name="Fischer G."/>
            <person name="Durrens P."/>
            <person name="Casaregola S."/>
            <person name="Lafontaine I."/>
            <person name="de Montigny J."/>
            <person name="Marck C."/>
            <person name="Neuveglise C."/>
            <person name="Talla E."/>
            <person name="Goffard N."/>
            <person name="Frangeul L."/>
            <person name="Aigle M."/>
            <person name="Anthouard V."/>
            <person name="Babour A."/>
            <person name="Barbe V."/>
            <person name="Barnay S."/>
            <person name="Blanchin S."/>
            <person name="Beckerich J.-M."/>
            <person name="Beyne E."/>
            <person name="Bleykasten C."/>
            <person name="Boisrame A."/>
            <person name="Boyer J."/>
            <person name="Cattolico L."/>
            <person name="Confanioleri F."/>
            <person name="de Daruvar A."/>
            <person name="Despons L."/>
            <person name="Fabre E."/>
            <person name="Fairhead C."/>
            <person name="Ferry-Dumazet H."/>
            <person name="Groppi A."/>
            <person name="Hantraye F."/>
            <person name="Hennequin C."/>
            <person name="Jauniaux N."/>
            <person name="Joyet P."/>
            <person name="Kachouri R."/>
            <person name="Kerrest A."/>
            <person name="Koszul R."/>
            <person name="Lemaire M."/>
            <person name="Lesur I."/>
            <person name="Ma L."/>
            <person name="Muller H."/>
            <person name="Nicaud J.-M."/>
            <person name="Nikolski M."/>
            <person name="Oztas S."/>
            <person name="Ozier-Kalogeropoulos O."/>
            <person name="Pellenz S."/>
            <person name="Potier S."/>
            <person name="Richard G.-F."/>
            <person name="Straub M.-L."/>
            <person name="Suleau A."/>
            <person name="Swennen D."/>
            <person name="Tekaia F."/>
            <person name="Wesolowski-Louvel M."/>
            <person name="Westhof E."/>
            <person name="Wirth B."/>
            <person name="Zeniou-Meyer M."/>
            <person name="Zivanovic Y."/>
            <person name="Bolotin-Fukuhara M."/>
            <person name="Thierry A."/>
            <person name="Bouchier C."/>
            <person name="Caudron B."/>
            <person name="Scarpelli C."/>
            <person name="Gaillardin C."/>
            <person name="Weissenbach J."/>
            <person name="Wincker P."/>
            <person name="Souciet J.-L."/>
        </authorList>
    </citation>
    <scope>NUCLEOTIDE SEQUENCE [LARGE SCALE GENOMIC DNA]</scope>
    <source>
        <strain>ATCC 8585 / CBS 2359 / DSM 70799 / NBRC 1267 / NRRL Y-1140 / WM37</strain>
    </source>
</reference>
<keyword id="KW-0010">Activator</keyword>
<keyword id="KW-0156">Chromatin regulator</keyword>
<keyword id="KW-0175">Coiled coil</keyword>
<keyword id="KW-0539">Nucleus</keyword>
<keyword id="KW-1185">Reference proteome</keyword>
<keyword id="KW-0804">Transcription</keyword>
<keyword id="KW-0805">Transcription regulation</keyword>
<organism>
    <name type="scientific">Kluyveromyces lactis (strain ATCC 8585 / CBS 2359 / DSM 70799 / NBRC 1267 / NRRL Y-1140 / WM37)</name>
    <name type="common">Yeast</name>
    <name type="synonym">Candida sphaerica</name>
    <dbReference type="NCBI Taxonomy" id="284590"/>
    <lineage>
        <taxon>Eukaryota</taxon>
        <taxon>Fungi</taxon>
        <taxon>Dikarya</taxon>
        <taxon>Ascomycota</taxon>
        <taxon>Saccharomycotina</taxon>
        <taxon>Saccharomycetes</taxon>
        <taxon>Saccharomycetales</taxon>
        <taxon>Saccharomycetaceae</taxon>
        <taxon>Kluyveromyces</taxon>
    </lineage>
</organism>